<gene>
    <name evidence="1" type="primary">lipA</name>
    <name type="ordered locus">SG0792</name>
</gene>
<comment type="function">
    <text evidence="1">Catalyzes the radical-mediated insertion of two sulfur atoms into the C-6 and C-8 positions of the octanoyl moiety bound to the lipoyl domains of lipoate-dependent enzymes, thereby converting the octanoylated domains into lipoylated derivatives.</text>
</comment>
<comment type="catalytic activity">
    <reaction evidence="1">
        <text>[[Fe-S] cluster scaffold protein carrying a second [4Fe-4S](2+) cluster] + N(6)-octanoyl-L-lysyl-[protein] + 2 oxidized [2Fe-2S]-[ferredoxin] + 2 S-adenosyl-L-methionine + 4 H(+) = [[Fe-S] cluster scaffold protein] + N(6)-[(R)-dihydrolipoyl]-L-lysyl-[protein] + 4 Fe(3+) + 2 hydrogen sulfide + 2 5'-deoxyadenosine + 2 L-methionine + 2 reduced [2Fe-2S]-[ferredoxin]</text>
        <dbReference type="Rhea" id="RHEA:16585"/>
        <dbReference type="Rhea" id="RHEA-COMP:9928"/>
        <dbReference type="Rhea" id="RHEA-COMP:10000"/>
        <dbReference type="Rhea" id="RHEA-COMP:10001"/>
        <dbReference type="Rhea" id="RHEA-COMP:10475"/>
        <dbReference type="Rhea" id="RHEA-COMP:14568"/>
        <dbReference type="Rhea" id="RHEA-COMP:14569"/>
        <dbReference type="ChEBI" id="CHEBI:15378"/>
        <dbReference type="ChEBI" id="CHEBI:17319"/>
        <dbReference type="ChEBI" id="CHEBI:29034"/>
        <dbReference type="ChEBI" id="CHEBI:29919"/>
        <dbReference type="ChEBI" id="CHEBI:33722"/>
        <dbReference type="ChEBI" id="CHEBI:33737"/>
        <dbReference type="ChEBI" id="CHEBI:33738"/>
        <dbReference type="ChEBI" id="CHEBI:57844"/>
        <dbReference type="ChEBI" id="CHEBI:59789"/>
        <dbReference type="ChEBI" id="CHEBI:78809"/>
        <dbReference type="ChEBI" id="CHEBI:83100"/>
        <dbReference type="EC" id="2.8.1.8"/>
    </reaction>
</comment>
<comment type="cofactor">
    <cofactor evidence="1">
        <name>[4Fe-4S] cluster</name>
        <dbReference type="ChEBI" id="CHEBI:49883"/>
    </cofactor>
    <text evidence="1">Binds 2 [4Fe-4S] clusters per subunit. One cluster is coordinated with 3 cysteines and an exchangeable S-adenosyl-L-methionine.</text>
</comment>
<comment type="pathway">
    <text evidence="1">Protein modification; protein lipoylation via endogenous pathway; protein N(6)-(lipoyl)lysine from octanoyl-[acyl-carrier-protein]: step 2/2.</text>
</comment>
<comment type="subcellular location">
    <subcellularLocation>
        <location evidence="1">Cytoplasm</location>
    </subcellularLocation>
</comment>
<comment type="similarity">
    <text evidence="1">Belongs to the radical SAM superfamily. Lipoyl synthase family.</text>
</comment>
<dbReference type="EC" id="2.8.1.8" evidence="1"/>
<dbReference type="EMBL" id="AP008232">
    <property type="protein sequence ID" value="BAE74067.1"/>
    <property type="molecule type" value="Genomic_DNA"/>
</dbReference>
<dbReference type="RefSeq" id="WP_011410655.1">
    <property type="nucleotide sequence ID" value="NC_007712.1"/>
</dbReference>
<dbReference type="SMR" id="Q2NUV8"/>
<dbReference type="STRING" id="343509.SG0792"/>
<dbReference type="KEGG" id="sgl:SG0792"/>
<dbReference type="eggNOG" id="COG0320">
    <property type="taxonomic scope" value="Bacteria"/>
</dbReference>
<dbReference type="HOGENOM" id="CLU_033144_2_1_6"/>
<dbReference type="OrthoDB" id="9787898at2"/>
<dbReference type="BioCyc" id="SGLO343509:SGP1_RS07000-MONOMER"/>
<dbReference type="UniPathway" id="UPA00538">
    <property type="reaction ID" value="UER00593"/>
</dbReference>
<dbReference type="Proteomes" id="UP000001932">
    <property type="component" value="Chromosome"/>
</dbReference>
<dbReference type="GO" id="GO:0005737">
    <property type="term" value="C:cytoplasm"/>
    <property type="evidence" value="ECO:0007669"/>
    <property type="project" value="UniProtKB-SubCell"/>
</dbReference>
<dbReference type="GO" id="GO:0051539">
    <property type="term" value="F:4 iron, 4 sulfur cluster binding"/>
    <property type="evidence" value="ECO:0007669"/>
    <property type="project" value="UniProtKB-UniRule"/>
</dbReference>
<dbReference type="GO" id="GO:0016992">
    <property type="term" value="F:lipoate synthase activity"/>
    <property type="evidence" value="ECO:0007669"/>
    <property type="project" value="UniProtKB-UniRule"/>
</dbReference>
<dbReference type="GO" id="GO:0046872">
    <property type="term" value="F:metal ion binding"/>
    <property type="evidence" value="ECO:0007669"/>
    <property type="project" value="UniProtKB-KW"/>
</dbReference>
<dbReference type="CDD" id="cd01335">
    <property type="entry name" value="Radical_SAM"/>
    <property type="match status" value="1"/>
</dbReference>
<dbReference type="FunFam" id="3.20.20.70:FF:000023">
    <property type="entry name" value="Lipoyl synthase"/>
    <property type="match status" value="1"/>
</dbReference>
<dbReference type="Gene3D" id="3.20.20.70">
    <property type="entry name" value="Aldolase class I"/>
    <property type="match status" value="1"/>
</dbReference>
<dbReference type="HAMAP" id="MF_00206">
    <property type="entry name" value="Lipoyl_synth"/>
    <property type="match status" value="1"/>
</dbReference>
<dbReference type="InterPro" id="IPR013785">
    <property type="entry name" value="Aldolase_TIM"/>
</dbReference>
<dbReference type="InterPro" id="IPR006638">
    <property type="entry name" value="Elp3/MiaA/NifB-like_rSAM"/>
</dbReference>
<dbReference type="InterPro" id="IPR031691">
    <property type="entry name" value="LIAS_N"/>
</dbReference>
<dbReference type="InterPro" id="IPR003698">
    <property type="entry name" value="Lipoyl_synth"/>
</dbReference>
<dbReference type="InterPro" id="IPR007197">
    <property type="entry name" value="rSAM"/>
</dbReference>
<dbReference type="NCBIfam" id="TIGR00510">
    <property type="entry name" value="lipA"/>
    <property type="match status" value="1"/>
</dbReference>
<dbReference type="NCBIfam" id="NF004019">
    <property type="entry name" value="PRK05481.1"/>
    <property type="match status" value="1"/>
</dbReference>
<dbReference type="NCBIfam" id="NF009544">
    <property type="entry name" value="PRK12928.1"/>
    <property type="match status" value="1"/>
</dbReference>
<dbReference type="PANTHER" id="PTHR10949">
    <property type="entry name" value="LIPOYL SYNTHASE"/>
    <property type="match status" value="1"/>
</dbReference>
<dbReference type="PANTHER" id="PTHR10949:SF0">
    <property type="entry name" value="LIPOYL SYNTHASE, MITOCHONDRIAL"/>
    <property type="match status" value="1"/>
</dbReference>
<dbReference type="Pfam" id="PF16881">
    <property type="entry name" value="LIAS_N"/>
    <property type="match status" value="1"/>
</dbReference>
<dbReference type="Pfam" id="PF04055">
    <property type="entry name" value="Radical_SAM"/>
    <property type="match status" value="1"/>
</dbReference>
<dbReference type="PIRSF" id="PIRSF005963">
    <property type="entry name" value="Lipoyl_synth"/>
    <property type="match status" value="1"/>
</dbReference>
<dbReference type="SFLD" id="SFLDF00271">
    <property type="entry name" value="lipoyl_synthase"/>
    <property type="match status" value="1"/>
</dbReference>
<dbReference type="SFLD" id="SFLDS00029">
    <property type="entry name" value="Radical_SAM"/>
    <property type="match status" value="1"/>
</dbReference>
<dbReference type="SMART" id="SM00729">
    <property type="entry name" value="Elp3"/>
    <property type="match status" value="1"/>
</dbReference>
<dbReference type="SUPFAM" id="SSF102114">
    <property type="entry name" value="Radical SAM enzymes"/>
    <property type="match status" value="1"/>
</dbReference>
<dbReference type="PROSITE" id="PS51918">
    <property type="entry name" value="RADICAL_SAM"/>
    <property type="match status" value="1"/>
</dbReference>
<name>LIPA_SODGM</name>
<accession>Q2NUV8</accession>
<keyword id="KW-0004">4Fe-4S</keyword>
<keyword id="KW-0963">Cytoplasm</keyword>
<keyword id="KW-0408">Iron</keyword>
<keyword id="KW-0411">Iron-sulfur</keyword>
<keyword id="KW-0479">Metal-binding</keyword>
<keyword id="KW-0949">S-adenosyl-L-methionine</keyword>
<keyword id="KW-0808">Transferase</keyword>
<reference key="1">
    <citation type="journal article" date="2006" name="Genome Res.">
        <title>Massive genome erosion and functional adaptations provide insights into the symbiotic lifestyle of Sodalis glossinidius in the tsetse host.</title>
        <authorList>
            <person name="Toh H."/>
            <person name="Weiss B.L."/>
            <person name="Perkin S.A.H."/>
            <person name="Yamashita A."/>
            <person name="Oshima K."/>
            <person name="Hattori M."/>
            <person name="Aksoy S."/>
        </authorList>
    </citation>
    <scope>NUCLEOTIDE SEQUENCE [LARGE SCALE GENOMIC DNA]</scope>
    <source>
        <strain>morsitans</strain>
    </source>
</reference>
<sequence length="321" mass="35981">MSKPIQMERGVKYRDADKMALIPIKTVAVERQEILRKPSWMKIKLPADSTRIQGIKVAMRKNGLHSVCEEASCPNLAECFNHGTATFMILGAICTRRCPFCDVAHGRPVTPDANEPEKLAQTIADMGLRYVVVTSVDRDDLRDGGAQHFADCISAIRAKNPNIRIETLVPDFRGRMDRALEIINAAPPDVFNHNLENVPRLYRQVRPGADYHWSLKLLENFKVANPQLPTKSGLMVGLGETNAEIVDVMRDLCRHGVTMLTLGQYLQPSRHHLPVKRYVSPQEFDEMKQEALAMGFTHAACGPFVRSSYHADLQAKGIEVK</sequence>
<feature type="chain" id="PRO_1000012286" description="Lipoyl synthase">
    <location>
        <begin position="1"/>
        <end position="321"/>
    </location>
</feature>
<feature type="domain" description="Radical SAM core" evidence="2">
    <location>
        <begin position="80"/>
        <end position="297"/>
    </location>
</feature>
<feature type="binding site" evidence="1">
    <location>
        <position position="68"/>
    </location>
    <ligand>
        <name>[4Fe-4S] cluster</name>
        <dbReference type="ChEBI" id="CHEBI:49883"/>
        <label>1</label>
    </ligand>
</feature>
<feature type="binding site" evidence="1">
    <location>
        <position position="73"/>
    </location>
    <ligand>
        <name>[4Fe-4S] cluster</name>
        <dbReference type="ChEBI" id="CHEBI:49883"/>
        <label>1</label>
    </ligand>
</feature>
<feature type="binding site" evidence="1">
    <location>
        <position position="79"/>
    </location>
    <ligand>
        <name>[4Fe-4S] cluster</name>
        <dbReference type="ChEBI" id="CHEBI:49883"/>
        <label>1</label>
    </ligand>
</feature>
<feature type="binding site" evidence="1">
    <location>
        <position position="94"/>
    </location>
    <ligand>
        <name>[4Fe-4S] cluster</name>
        <dbReference type="ChEBI" id="CHEBI:49883"/>
        <label>2</label>
        <note>4Fe-4S-S-AdoMet</note>
    </ligand>
</feature>
<feature type="binding site" evidence="1">
    <location>
        <position position="98"/>
    </location>
    <ligand>
        <name>[4Fe-4S] cluster</name>
        <dbReference type="ChEBI" id="CHEBI:49883"/>
        <label>2</label>
        <note>4Fe-4S-S-AdoMet</note>
    </ligand>
</feature>
<feature type="binding site" evidence="1">
    <location>
        <position position="101"/>
    </location>
    <ligand>
        <name>[4Fe-4S] cluster</name>
        <dbReference type="ChEBI" id="CHEBI:49883"/>
        <label>2</label>
        <note>4Fe-4S-S-AdoMet</note>
    </ligand>
</feature>
<feature type="binding site" evidence="1">
    <location>
        <position position="308"/>
    </location>
    <ligand>
        <name>[4Fe-4S] cluster</name>
        <dbReference type="ChEBI" id="CHEBI:49883"/>
        <label>1</label>
    </ligand>
</feature>
<organism>
    <name type="scientific">Sodalis glossinidius (strain morsitans)</name>
    <dbReference type="NCBI Taxonomy" id="343509"/>
    <lineage>
        <taxon>Bacteria</taxon>
        <taxon>Pseudomonadati</taxon>
        <taxon>Pseudomonadota</taxon>
        <taxon>Gammaproteobacteria</taxon>
        <taxon>Enterobacterales</taxon>
        <taxon>Bruguierivoracaceae</taxon>
        <taxon>Sodalis</taxon>
    </lineage>
</organism>
<evidence type="ECO:0000255" key="1">
    <source>
        <dbReference type="HAMAP-Rule" id="MF_00206"/>
    </source>
</evidence>
<evidence type="ECO:0000255" key="2">
    <source>
        <dbReference type="PROSITE-ProRule" id="PRU01266"/>
    </source>
</evidence>
<protein>
    <recommendedName>
        <fullName evidence="1">Lipoyl synthase</fullName>
        <ecNumber evidence="1">2.8.1.8</ecNumber>
    </recommendedName>
    <alternativeName>
        <fullName evidence="1">Lip-syn</fullName>
        <shortName evidence="1">LS</shortName>
    </alternativeName>
    <alternativeName>
        <fullName evidence="1">Lipoate synthase</fullName>
    </alternativeName>
    <alternativeName>
        <fullName evidence="1">Lipoic acid synthase</fullName>
    </alternativeName>
    <alternativeName>
        <fullName evidence="1">Sulfur insertion protein LipA</fullName>
    </alternativeName>
</protein>
<proteinExistence type="inferred from homology"/>